<name>CCA22_ARATH</name>
<gene>
    <name type="primary">CYCA2-2</name>
    <name type="synonym">CYC3B</name>
    <name type="ordered locus">At5g11300</name>
    <name type="ORF">F2I11.190</name>
</gene>
<comment type="tissue specificity">
    <text evidence="1">Expressed in roots, stems, leaves, flowers and siliques.</text>
</comment>
<comment type="similarity">
    <text evidence="2">Belongs to the cyclin family. Cyclin AB subfamily.</text>
</comment>
<comment type="sequence caution" evidence="2">
    <conflict type="erroneous gene model prediction">
        <sequence resource="EMBL-CDS" id="CAB96665"/>
    </conflict>
</comment>
<protein>
    <recommendedName>
        <fullName>Cyclin-A2-2</fullName>
    </recommendedName>
    <alternativeName>
        <fullName>Cyc3b-At</fullName>
    </alternativeName>
    <alternativeName>
        <fullName>Cyclin-3b</fullName>
    </alternativeName>
    <alternativeName>
        <fullName>G2/mitotic-specific cyclin-A2-2</fullName>
        <shortName>CycA2;2</shortName>
    </alternativeName>
</protein>
<accession>Q147G5</accession>
<accession>Q39073</accession>
<accession>Q9LFM7</accession>
<keyword id="KW-0131">Cell cycle</keyword>
<keyword id="KW-0132">Cell division</keyword>
<keyword id="KW-0195">Cyclin</keyword>
<keyword id="KW-1185">Reference proteome</keyword>
<evidence type="ECO:0000269" key="1">
    <source>
    </source>
</evidence>
<evidence type="ECO:0000305" key="2"/>
<organism>
    <name type="scientific">Arabidopsis thaliana</name>
    <name type="common">Mouse-ear cress</name>
    <dbReference type="NCBI Taxonomy" id="3702"/>
    <lineage>
        <taxon>Eukaryota</taxon>
        <taxon>Viridiplantae</taxon>
        <taxon>Streptophyta</taxon>
        <taxon>Embryophyta</taxon>
        <taxon>Tracheophyta</taxon>
        <taxon>Spermatophyta</taxon>
        <taxon>Magnoliopsida</taxon>
        <taxon>eudicotyledons</taxon>
        <taxon>Gunneridae</taxon>
        <taxon>Pentapetalae</taxon>
        <taxon>rosids</taxon>
        <taxon>malvids</taxon>
        <taxon>Brassicales</taxon>
        <taxon>Brassicaceae</taxon>
        <taxon>Camelineae</taxon>
        <taxon>Arabidopsis</taxon>
    </lineage>
</organism>
<dbReference type="EMBL" id="Z31402">
    <property type="protein sequence ID" value="CAA83277.1"/>
    <property type="molecule type" value="mRNA"/>
</dbReference>
<dbReference type="EMBL" id="AL360314">
    <property type="protein sequence ID" value="CAB96665.1"/>
    <property type="status" value="ALT_SEQ"/>
    <property type="molecule type" value="Genomic_DNA"/>
</dbReference>
<dbReference type="EMBL" id="CP002688">
    <property type="protein sequence ID" value="AED91657.1"/>
    <property type="molecule type" value="Genomic_DNA"/>
</dbReference>
<dbReference type="EMBL" id="BT026128">
    <property type="protein sequence ID" value="ABG48484.1"/>
    <property type="molecule type" value="mRNA"/>
</dbReference>
<dbReference type="RefSeq" id="NP_568248.2">
    <property type="nucleotide sequence ID" value="NM_121168.5"/>
</dbReference>
<dbReference type="SMR" id="Q147G5"/>
<dbReference type="BioGRID" id="16279">
    <property type="interactions" value="15"/>
</dbReference>
<dbReference type="FunCoup" id="Q147G5">
    <property type="interactions" value="1826"/>
</dbReference>
<dbReference type="IntAct" id="Q147G5">
    <property type="interactions" value="4"/>
</dbReference>
<dbReference type="STRING" id="3702.Q147G5"/>
<dbReference type="PaxDb" id="3702-AT5G11300.1"/>
<dbReference type="EnsemblPlants" id="AT5G11300.1">
    <property type="protein sequence ID" value="AT5G11300.1"/>
    <property type="gene ID" value="AT5G11300"/>
</dbReference>
<dbReference type="GeneID" id="831001"/>
<dbReference type="Gramene" id="AT5G11300.1">
    <property type="protein sequence ID" value="AT5G11300.1"/>
    <property type="gene ID" value="AT5G11300"/>
</dbReference>
<dbReference type="KEGG" id="ath:AT5G11300"/>
<dbReference type="Araport" id="AT5G11300"/>
<dbReference type="TAIR" id="AT5G11300">
    <property type="gene designation" value="CYC3B"/>
</dbReference>
<dbReference type="eggNOG" id="KOG0654">
    <property type="taxonomic scope" value="Eukaryota"/>
</dbReference>
<dbReference type="HOGENOM" id="CLU_020695_13_3_1"/>
<dbReference type="InParanoid" id="Q147G5"/>
<dbReference type="OMA" id="ELTLMEY"/>
<dbReference type="PhylomeDB" id="Q147G5"/>
<dbReference type="PRO" id="PR:Q147G5"/>
<dbReference type="Proteomes" id="UP000006548">
    <property type="component" value="Chromosome 5"/>
</dbReference>
<dbReference type="ExpressionAtlas" id="Q147G5">
    <property type="expression patterns" value="baseline and differential"/>
</dbReference>
<dbReference type="GO" id="GO:0016538">
    <property type="term" value="F:cyclin-dependent protein serine/threonine kinase regulator activity"/>
    <property type="evidence" value="ECO:0007669"/>
    <property type="project" value="InterPro"/>
</dbReference>
<dbReference type="GO" id="GO:0051301">
    <property type="term" value="P:cell division"/>
    <property type="evidence" value="ECO:0007669"/>
    <property type="project" value="UniProtKB-KW"/>
</dbReference>
<dbReference type="GO" id="GO:0044772">
    <property type="term" value="P:mitotic cell cycle phase transition"/>
    <property type="evidence" value="ECO:0007669"/>
    <property type="project" value="InterPro"/>
</dbReference>
<dbReference type="GO" id="GO:2000123">
    <property type="term" value="P:positive regulation of stomatal complex development"/>
    <property type="evidence" value="ECO:0000316"/>
    <property type="project" value="TAIR"/>
</dbReference>
<dbReference type="GO" id="GO:0010389">
    <property type="term" value="P:regulation of G2/M transition of mitotic cell cycle"/>
    <property type="evidence" value="ECO:0000316"/>
    <property type="project" value="TAIR"/>
</dbReference>
<dbReference type="CDD" id="cd20506">
    <property type="entry name" value="CYCLIN_AtCycA-like_rpt2"/>
    <property type="match status" value="1"/>
</dbReference>
<dbReference type="CDD" id="cd20562">
    <property type="entry name" value="CYCLIN_AtCycA_like_rpt1"/>
    <property type="match status" value="1"/>
</dbReference>
<dbReference type="FunFam" id="1.10.472.10:FF:000013">
    <property type="entry name" value="Cyclin A1"/>
    <property type="match status" value="1"/>
</dbReference>
<dbReference type="FunFam" id="1.10.472.10:FF:000167">
    <property type="entry name" value="Mitotic cyclin 6"/>
    <property type="match status" value="1"/>
</dbReference>
<dbReference type="Gene3D" id="1.10.472.10">
    <property type="entry name" value="Cyclin-like"/>
    <property type="match status" value="2"/>
</dbReference>
<dbReference type="InterPro" id="IPR039361">
    <property type="entry name" value="Cyclin"/>
</dbReference>
<dbReference type="InterPro" id="IPR013763">
    <property type="entry name" value="Cyclin-like_dom"/>
</dbReference>
<dbReference type="InterPro" id="IPR036915">
    <property type="entry name" value="Cyclin-like_sf"/>
</dbReference>
<dbReference type="InterPro" id="IPR046965">
    <property type="entry name" value="Cyclin_A/B-like"/>
</dbReference>
<dbReference type="InterPro" id="IPR004367">
    <property type="entry name" value="Cyclin_C-dom"/>
</dbReference>
<dbReference type="InterPro" id="IPR006671">
    <property type="entry name" value="Cyclin_N"/>
</dbReference>
<dbReference type="InterPro" id="IPR048258">
    <property type="entry name" value="Cyclins_cyclin-box"/>
</dbReference>
<dbReference type="PANTHER" id="PTHR10177">
    <property type="entry name" value="CYCLINS"/>
    <property type="match status" value="1"/>
</dbReference>
<dbReference type="Pfam" id="PF02984">
    <property type="entry name" value="Cyclin_C"/>
    <property type="match status" value="1"/>
</dbReference>
<dbReference type="Pfam" id="PF00134">
    <property type="entry name" value="Cyclin_N"/>
    <property type="match status" value="1"/>
</dbReference>
<dbReference type="PIRSF" id="PIRSF001771">
    <property type="entry name" value="Cyclin_A_B_D_E"/>
    <property type="match status" value="1"/>
</dbReference>
<dbReference type="SMART" id="SM00385">
    <property type="entry name" value="CYCLIN"/>
    <property type="match status" value="2"/>
</dbReference>
<dbReference type="SMART" id="SM01332">
    <property type="entry name" value="Cyclin_C"/>
    <property type="match status" value="1"/>
</dbReference>
<dbReference type="SUPFAM" id="SSF47954">
    <property type="entry name" value="Cyclin-like"/>
    <property type="match status" value="2"/>
</dbReference>
<dbReference type="PROSITE" id="PS00292">
    <property type="entry name" value="CYCLINS"/>
    <property type="match status" value="1"/>
</dbReference>
<proteinExistence type="evidence at transcript level"/>
<feature type="chain" id="PRO_0000286994" description="Cyclin-A2-2">
    <location>
        <begin position="1"/>
        <end position="436"/>
    </location>
</feature>
<feature type="sequence conflict" description="In Ref. 1; CAA83277." evidence="2" ref="1">
    <original>P</original>
    <variation>R</variation>
    <location>
        <position position="284"/>
    </location>
</feature>
<feature type="sequence conflict" description="In Ref. 1; CAA83277." evidence="2" ref="1">
    <original>S</original>
    <variation>L</variation>
    <location>
        <position position="432"/>
    </location>
</feature>
<sequence length="436" mass="49694">MYCSSSMHPNANKENISTSDVQESFVRITRSRAKKAMGRGVSIPPTKPSFKQQKRRAVLKDVSNTSADIIYSELRKGGNIKANRKCLKEPKKAAKEGANSAMDILVDMHTEKSKLAEDLSKIRMAEAQDVSLSNFKDEEITEQQEDGSGVMELLQVVDIDSNVEDPQCCSLYAADIYDNIHVAELQQRPLANYMELVQRDIDPDMRKILIDWLVEVSDDYKLVPDTLYLTVNLIDRFLSNSYIERQRLQLLGVSCMLIASKYEELSAPGVEEFCFITANTYTRPEVLSMEIQILNFVHFRLSVPTTKTFLRRFIKAAQASYKVPFIELEYLANYLAELTLVEYSFLRFLPSLIAASAVFLARWTLDQTDHPWNPTLQHYTRYEVAELKNTVLAMEDLQLNTSGCTLAATREKYNQPKFKSVAKLTSPKRVTSLFSR</sequence>
<reference key="1">
    <citation type="journal article" date="1994" name="Proc. Natl. Acad. Sci. U.S.A.">
        <title>Three discrete classes of Arabidopsis cyclins are expressed during different intervals of the cell cycle.</title>
        <authorList>
            <person name="Ferreira P."/>
            <person name="Hemerly A."/>
            <person name="de Almeida Engler J."/>
            <person name="Bergounioux C."/>
            <person name="Burssens S."/>
            <person name="van Montagu M."/>
            <person name="Engler G."/>
            <person name="Inze D."/>
        </authorList>
    </citation>
    <scope>NUCLEOTIDE SEQUENCE [MRNA]</scope>
    <scope>TISSUE SPECIFICITY</scope>
    <source>
        <strain>cv. Columbia</strain>
        <tissue>Callus</tissue>
    </source>
</reference>
<reference key="2">
    <citation type="journal article" date="2000" name="Nature">
        <title>Sequence and analysis of chromosome 5 of the plant Arabidopsis thaliana.</title>
        <authorList>
            <person name="Tabata S."/>
            <person name="Kaneko T."/>
            <person name="Nakamura Y."/>
            <person name="Kotani H."/>
            <person name="Kato T."/>
            <person name="Asamizu E."/>
            <person name="Miyajima N."/>
            <person name="Sasamoto S."/>
            <person name="Kimura T."/>
            <person name="Hosouchi T."/>
            <person name="Kawashima K."/>
            <person name="Kohara M."/>
            <person name="Matsumoto M."/>
            <person name="Matsuno A."/>
            <person name="Muraki A."/>
            <person name="Nakayama S."/>
            <person name="Nakazaki N."/>
            <person name="Naruo K."/>
            <person name="Okumura S."/>
            <person name="Shinpo S."/>
            <person name="Takeuchi C."/>
            <person name="Wada T."/>
            <person name="Watanabe A."/>
            <person name="Yamada M."/>
            <person name="Yasuda M."/>
            <person name="Sato S."/>
            <person name="de la Bastide M."/>
            <person name="Huang E."/>
            <person name="Spiegel L."/>
            <person name="Gnoj L."/>
            <person name="O'Shaughnessy A."/>
            <person name="Preston R."/>
            <person name="Habermann K."/>
            <person name="Murray J."/>
            <person name="Johnson D."/>
            <person name="Rohlfing T."/>
            <person name="Nelson J."/>
            <person name="Stoneking T."/>
            <person name="Pepin K."/>
            <person name="Spieth J."/>
            <person name="Sekhon M."/>
            <person name="Armstrong J."/>
            <person name="Becker M."/>
            <person name="Belter E."/>
            <person name="Cordum H."/>
            <person name="Cordes M."/>
            <person name="Courtney L."/>
            <person name="Courtney W."/>
            <person name="Dante M."/>
            <person name="Du H."/>
            <person name="Edwards J."/>
            <person name="Fryman J."/>
            <person name="Haakensen B."/>
            <person name="Lamar E."/>
            <person name="Latreille P."/>
            <person name="Leonard S."/>
            <person name="Meyer R."/>
            <person name="Mulvaney E."/>
            <person name="Ozersky P."/>
            <person name="Riley A."/>
            <person name="Strowmatt C."/>
            <person name="Wagner-McPherson C."/>
            <person name="Wollam A."/>
            <person name="Yoakum M."/>
            <person name="Bell M."/>
            <person name="Dedhia N."/>
            <person name="Parnell L."/>
            <person name="Shah R."/>
            <person name="Rodriguez M."/>
            <person name="Hoon See L."/>
            <person name="Vil D."/>
            <person name="Baker J."/>
            <person name="Kirchoff K."/>
            <person name="Toth K."/>
            <person name="King L."/>
            <person name="Bahret A."/>
            <person name="Miller B."/>
            <person name="Marra M.A."/>
            <person name="Martienssen R."/>
            <person name="McCombie W.R."/>
            <person name="Wilson R.K."/>
            <person name="Murphy G."/>
            <person name="Bancroft I."/>
            <person name="Volckaert G."/>
            <person name="Wambutt R."/>
            <person name="Duesterhoeft A."/>
            <person name="Stiekema W."/>
            <person name="Pohl T."/>
            <person name="Entian K.-D."/>
            <person name="Terryn N."/>
            <person name="Hartley N."/>
            <person name="Bent E."/>
            <person name="Johnson S."/>
            <person name="Langham S.-A."/>
            <person name="McCullagh B."/>
            <person name="Robben J."/>
            <person name="Grymonprez B."/>
            <person name="Zimmermann W."/>
            <person name="Ramsperger U."/>
            <person name="Wedler H."/>
            <person name="Balke K."/>
            <person name="Wedler E."/>
            <person name="Peters S."/>
            <person name="van Staveren M."/>
            <person name="Dirkse W."/>
            <person name="Mooijman P."/>
            <person name="Klein Lankhorst R."/>
            <person name="Weitzenegger T."/>
            <person name="Bothe G."/>
            <person name="Rose M."/>
            <person name="Hauf J."/>
            <person name="Berneiser S."/>
            <person name="Hempel S."/>
            <person name="Feldpausch M."/>
            <person name="Lamberth S."/>
            <person name="Villarroel R."/>
            <person name="Gielen J."/>
            <person name="Ardiles W."/>
            <person name="Bents O."/>
            <person name="Lemcke K."/>
            <person name="Kolesov G."/>
            <person name="Mayer K.F.X."/>
            <person name="Rudd S."/>
            <person name="Schoof H."/>
            <person name="Schueller C."/>
            <person name="Zaccaria P."/>
            <person name="Mewes H.-W."/>
            <person name="Bevan M."/>
            <person name="Fransz P.F."/>
        </authorList>
    </citation>
    <scope>NUCLEOTIDE SEQUENCE [LARGE SCALE GENOMIC DNA]</scope>
    <source>
        <strain>cv. Columbia</strain>
    </source>
</reference>
<reference key="3">
    <citation type="journal article" date="2017" name="Plant J.">
        <title>Araport11: a complete reannotation of the Arabidopsis thaliana reference genome.</title>
        <authorList>
            <person name="Cheng C.Y."/>
            <person name="Krishnakumar V."/>
            <person name="Chan A.P."/>
            <person name="Thibaud-Nissen F."/>
            <person name="Schobel S."/>
            <person name="Town C.D."/>
        </authorList>
    </citation>
    <scope>GENOME REANNOTATION</scope>
    <source>
        <strain>cv. Columbia</strain>
    </source>
</reference>
<reference key="4">
    <citation type="submission" date="2006-07" db="EMBL/GenBank/DDBJ databases">
        <title>Arabidopsis ORF clones.</title>
        <authorList>
            <person name="Kim C.J."/>
            <person name="Chen H."/>
            <person name="Quinitio C."/>
            <person name="Shinn P."/>
            <person name="Ecker J.R."/>
        </authorList>
    </citation>
    <scope>NUCLEOTIDE SEQUENCE [LARGE SCALE MRNA]</scope>
    <source>
        <strain>cv. Columbia</strain>
    </source>
</reference>
<reference key="5">
    <citation type="journal article" date="2004" name="Plant Physiol.">
        <title>Genome-wide analysis of the cyclin family in Arabidopsis and comparative phylogenetic analysis of plant cyclin-like proteins.</title>
        <authorList>
            <person name="Wang G."/>
            <person name="Kong H."/>
            <person name="Sun Y."/>
            <person name="Zhang X."/>
            <person name="Zhang W."/>
            <person name="Altman N."/>
            <person name="dePamphilis C.W."/>
            <person name="Ma H."/>
        </authorList>
    </citation>
    <scope>GENE FAMILY</scope>
    <scope>NOMENCLATURE</scope>
</reference>